<dbReference type="EMBL" id="L77117">
    <property type="protein sequence ID" value="AAB98718.1"/>
    <property type="molecule type" value="Genomic_DNA"/>
</dbReference>
<dbReference type="PIR" id="B64390">
    <property type="entry name" value="B64390"/>
</dbReference>
<dbReference type="RefSeq" id="WP_010870227.1">
    <property type="nucleotide sequence ID" value="NC_000909.1"/>
</dbReference>
<dbReference type="SMR" id="Q58132"/>
<dbReference type="STRING" id="243232.MJ_0722"/>
<dbReference type="PaxDb" id="243232-MJ_0722"/>
<dbReference type="EnsemblBacteria" id="AAB98718">
    <property type="protein sequence ID" value="AAB98718"/>
    <property type="gene ID" value="MJ_0722"/>
</dbReference>
<dbReference type="GeneID" id="1451599"/>
<dbReference type="KEGG" id="mja:MJ_0722"/>
<dbReference type="eggNOG" id="arCOG02587">
    <property type="taxonomic scope" value="Archaea"/>
</dbReference>
<dbReference type="HOGENOM" id="CLU_139698_5_5_2"/>
<dbReference type="InParanoid" id="Q58132"/>
<dbReference type="OrthoDB" id="5583at2157"/>
<dbReference type="PhylomeDB" id="Q58132"/>
<dbReference type="Proteomes" id="UP000000805">
    <property type="component" value="Chromosome"/>
</dbReference>
<dbReference type="GO" id="GO:0051539">
    <property type="term" value="F:4 iron, 4 sulfur cluster binding"/>
    <property type="evidence" value="ECO:0007669"/>
    <property type="project" value="UniProtKB-KW"/>
</dbReference>
<dbReference type="GO" id="GO:0046872">
    <property type="term" value="F:metal ion binding"/>
    <property type="evidence" value="ECO:0007669"/>
    <property type="project" value="UniProtKB-KW"/>
</dbReference>
<dbReference type="GO" id="GO:0016491">
    <property type="term" value="F:oxidoreductase activity"/>
    <property type="evidence" value="ECO:0007669"/>
    <property type="project" value="UniProtKB-ARBA"/>
</dbReference>
<dbReference type="Gene3D" id="3.30.70.20">
    <property type="match status" value="1"/>
</dbReference>
<dbReference type="InterPro" id="IPR017896">
    <property type="entry name" value="4Fe4S_Fe-S-bd"/>
</dbReference>
<dbReference type="InterPro" id="IPR017900">
    <property type="entry name" value="4Fe4S_Fe_S_CS"/>
</dbReference>
<dbReference type="PANTHER" id="PTHR43122">
    <property type="entry name" value="FERREDOXIN SUBUNIT OF PYRUVATE:FLAVODOXIN OXIDOREDUCTASE-RELATED"/>
    <property type="match status" value="1"/>
</dbReference>
<dbReference type="PANTHER" id="PTHR43122:SF1">
    <property type="entry name" value="IRON-SULFUR-BINDING PROTEIN"/>
    <property type="match status" value="1"/>
</dbReference>
<dbReference type="Pfam" id="PF12838">
    <property type="entry name" value="Fer4_7"/>
    <property type="match status" value="1"/>
</dbReference>
<dbReference type="SUPFAM" id="SSF54862">
    <property type="entry name" value="4Fe-4S ferredoxins"/>
    <property type="match status" value="1"/>
</dbReference>
<dbReference type="PROSITE" id="PS00198">
    <property type="entry name" value="4FE4S_FER_1"/>
    <property type="match status" value="2"/>
</dbReference>
<dbReference type="PROSITE" id="PS51379">
    <property type="entry name" value="4FE4S_FER_2"/>
    <property type="match status" value="2"/>
</dbReference>
<comment type="function">
    <text evidence="1">Ferredoxins are iron-sulfur proteins that transfer electrons probably in the CO-dehydrogenase complex.</text>
</comment>
<comment type="cofactor">
    <cofactor evidence="1">
        <name>[4Fe-4S] cluster</name>
        <dbReference type="ChEBI" id="CHEBI:49883"/>
    </cofactor>
    <text evidence="1">Binds 2 [4Fe-4S] clusters.</text>
</comment>
<evidence type="ECO:0000250" key="1"/>
<evidence type="ECO:0000255" key="2">
    <source>
        <dbReference type="PROSITE-ProRule" id="PRU00711"/>
    </source>
</evidence>
<proteinExistence type="inferred from homology"/>
<reference key="1">
    <citation type="journal article" date="1996" name="Science">
        <title>Complete genome sequence of the methanogenic archaeon, Methanococcus jannaschii.</title>
        <authorList>
            <person name="Bult C.J."/>
            <person name="White O."/>
            <person name="Olsen G.J."/>
            <person name="Zhou L."/>
            <person name="Fleischmann R.D."/>
            <person name="Sutton G.G."/>
            <person name="Blake J.A."/>
            <person name="FitzGerald L.M."/>
            <person name="Clayton R.A."/>
            <person name="Gocayne J.D."/>
            <person name="Kerlavage A.R."/>
            <person name="Dougherty B.A."/>
            <person name="Tomb J.-F."/>
            <person name="Adams M.D."/>
            <person name="Reich C.I."/>
            <person name="Overbeek R."/>
            <person name="Kirkness E.F."/>
            <person name="Weinstock K.G."/>
            <person name="Merrick J.M."/>
            <person name="Glodek A."/>
            <person name="Scott J.L."/>
            <person name="Geoghagen N.S.M."/>
            <person name="Weidman J.F."/>
            <person name="Fuhrmann J.L."/>
            <person name="Nguyen D."/>
            <person name="Utterback T.R."/>
            <person name="Kelley J.M."/>
            <person name="Peterson J.D."/>
            <person name="Sadow P.W."/>
            <person name="Hanna M.C."/>
            <person name="Cotton M.D."/>
            <person name="Roberts K.M."/>
            <person name="Hurst M.A."/>
            <person name="Kaine B.P."/>
            <person name="Borodovsky M."/>
            <person name="Klenk H.-P."/>
            <person name="Fraser C.M."/>
            <person name="Smith H.O."/>
            <person name="Woese C.R."/>
            <person name="Venter J.C."/>
        </authorList>
    </citation>
    <scope>NUCLEOTIDE SEQUENCE [LARGE SCALE GENOMIC DNA]</scope>
    <source>
        <strain>ATCC 43067 / DSM 2661 / JAL-1 / JCM 10045 / NBRC 100440</strain>
    </source>
</reference>
<accession>Q58132</accession>
<keyword id="KW-0004">4Fe-4S</keyword>
<keyword id="KW-0249">Electron transport</keyword>
<keyword id="KW-0408">Iron</keyword>
<keyword id="KW-0411">Iron-sulfur</keyword>
<keyword id="KW-0479">Metal-binding</keyword>
<keyword id="KW-1185">Reference proteome</keyword>
<keyword id="KW-0677">Repeat</keyword>
<keyword id="KW-0813">Transport</keyword>
<organism>
    <name type="scientific">Methanocaldococcus jannaschii (strain ATCC 43067 / DSM 2661 / JAL-1 / JCM 10045 / NBRC 100440)</name>
    <name type="common">Methanococcus jannaschii</name>
    <dbReference type="NCBI Taxonomy" id="243232"/>
    <lineage>
        <taxon>Archaea</taxon>
        <taxon>Methanobacteriati</taxon>
        <taxon>Methanobacteriota</taxon>
        <taxon>Methanomada group</taxon>
        <taxon>Methanococci</taxon>
        <taxon>Methanococcales</taxon>
        <taxon>Methanocaldococcaceae</taxon>
        <taxon>Methanocaldococcus</taxon>
    </lineage>
</organism>
<protein>
    <recommendedName>
        <fullName>Uncharacterized ferredoxin MJ0722</fullName>
    </recommendedName>
</protein>
<gene>
    <name type="ordered locus">MJ0722</name>
</gene>
<name>FER7_METJA</name>
<sequence>MAVEIIVDREKCIGCGRCYDVCPKGPLIWTKDENGKYYAYDVEYCHNCKFCAGRCPTNAILIKVVKPKKKDENKNKK</sequence>
<feature type="chain" id="PRO_0000159135" description="Uncharacterized ferredoxin MJ0722">
    <location>
        <begin position="1"/>
        <end position="77"/>
    </location>
</feature>
<feature type="domain" description="4Fe-4S ferredoxin-type 1" evidence="2">
    <location>
        <begin position="3"/>
        <end position="32"/>
    </location>
</feature>
<feature type="domain" description="4Fe-4S ferredoxin-type 2" evidence="2">
    <location>
        <begin position="36"/>
        <end position="65"/>
    </location>
</feature>
<feature type="binding site" evidence="1">
    <location>
        <position position="12"/>
    </location>
    <ligand>
        <name>[4Fe-4S] cluster</name>
        <dbReference type="ChEBI" id="CHEBI:49883"/>
        <label>1</label>
    </ligand>
</feature>
<feature type="binding site" evidence="1">
    <location>
        <position position="15"/>
    </location>
    <ligand>
        <name>[4Fe-4S] cluster</name>
        <dbReference type="ChEBI" id="CHEBI:49883"/>
        <label>1</label>
    </ligand>
</feature>
<feature type="binding site" evidence="1">
    <location>
        <position position="18"/>
    </location>
    <ligand>
        <name>[4Fe-4S] cluster</name>
        <dbReference type="ChEBI" id="CHEBI:49883"/>
        <label>1</label>
    </ligand>
</feature>
<feature type="binding site" evidence="1">
    <location>
        <position position="22"/>
    </location>
    <ligand>
        <name>[4Fe-4S] cluster</name>
        <dbReference type="ChEBI" id="CHEBI:49883"/>
        <label>1</label>
    </ligand>
</feature>
<feature type="binding site" evidence="1">
    <location>
        <position position="45"/>
    </location>
    <ligand>
        <name>[4Fe-4S] cluster</name>
        <dbReference type="ChEBI" id="CHEBI:49883"/>
        <label>2</label>
    </ligand>
</feature>
<feature type="binding site" evidence="1">
    <location>
        <position position="48"/>
    </location>
    <ligand>
        <name>[4Fe-4S] cluster</name>
        <dbReference type="ChEBI" id="CHEBI:49883"/>
        <label>2</label>
    </ligand>
</feature>
<feature type="binding site" evidence="1">
    <location>
        <position position="51"/>
    </location>
    <ligand>
        <name>[4Fe-4S] cluster</name>
        <dbReference type="ChEBI" id="CHEBI:49883"/>
        <label>2</label>
    </ligand>
</feature>
<feature type="binding site" evidence="1">
    <location>
        <position position="55"/>
    </location>
    <ligand>
        <name>[4Fe-4S] cluster</name>
        <dbReference type="ChEBI" id="CHEBI:49883"/>
        <label>2</label>
    </ligand>
</feature>